<comment type="function">
    <text evidence="1">May facilitate the viral transport through neural circuits.</text>
</comment>
<comment type="subcellular location">
    <subcellularLocation>
        <location evidence="1">Virion tegument</location>
    </subcellularLocation>
    <subcellularLocation>
        <location evidence="1">Host cytoplasm</location>
    </subcellularLocation>
    <subcellularLocation>
        <location evidence="1">Host nucleus</location>
    </subcellularLocation>
</comment>
<comment type="similarity">
    <text evidence="3">Belongs to the alphaherpesvirinae HHV-1 UL21 protein family.</text>
</comment>
<name>TG21_PSHV1</name>
<sequence length="569" mass="62661">MELRVERVEKNYERRLAVRYHDETAGRIYVVYGGCIFSMRTVGRDMSITMFGYRLRSPVMCALVSTELLQNRRGRGEAAAEPSVGGAGSPGADYLFTHHLGSASGEAPEDLVNTFDVNVRGLVLSKLFVGFPVPDGIVLRLGEVDEGTGVLRILAKPRAVNSVTGFVYHLDSASLDLTQAELYEVPQFLAKDIEDLLRMGELRRSPLRLSIPRTPVIVTGNRGLSTITVPSSRGRGGDRRRRRRNVTKMAGHVQIKMFRDERDGQQTETDAGRAEEEARHISGWSGGDHCRVEPCEVSHLRVWKVVSLIEVALAVRKGPLSWLGLAHKNPTDNLRAVLKGEARDVCEKLGPWTEIMGKSVLRPGPEMIYATVNYLLELGGLQSKFCIMEDLCNKYAAKHNIDVPNEAPPSDEMALIEELAVSILQKAAVVCEVLRFAAKAESENIAAVRNVVAPKQYGAASELLVHETSFLLNSARGGAFLGPEDDGRAATTRPLFKRAMARTDKKVSAILACIYLESRPSRIVGTILGGEDLVRALEEARLRIVDPWDKDDISAALRVLDSIVNFRLA</sequence>
<proteinExistence type="inferred from homology"/>
<accession>Q6UDI6</accession>
<feature type="chain" id="PRO_0000406847" description="Tegument protein UL21">
    <location>
        <begin position="1"/>
        <end position="569"/>
    </location>
</feature>
<feature type="region of interest" description="Disordered" evidence="2">
    <location>
        <begin position="261"/>
        <end position="280"/>
    </location>
</feature>
<keyword id="KW-1035">Host cytoplasm</keyword>
<keyword id="KW-1048">Host nucleus</keyword>
<keyword id="KW-1185">Reference proteome</keyword>
<keyword id="KW-0946">Virion</keyword>
<keyword id="KW-0920">Virion tegument</keyword>
<dbReference type="EMBL" id="AY372243">
    <property type="protein sequence ID" value="AAQ73724.1"/>
    <property type="molecule type" value="Genomic_DNA"/>
</dbReference>
<dbReference type="RefSeq" id="NP_944418.1">
    <property type="nucleotide sequence ID" value="NC_005264.1"/>
</dbReference>
<dbReference type="SMR" id="Q6UDI6"/>
<dbReference type="GeneID" id="2656964"/>
<dbReference type="KEGG" id="vg:2656964"/>
<dbReference type="Proteomes" id="UP000006840">
    <property type="component" value="Segment"/>
</dbReference>
<dbReference type="GO" id="GO:0030430">
    <property type="term" value="C:host cell cytoplasm"/>
    <property type="evidence" value="ECO:0007669"/>
    <property type="project" value="UniProtKB-SubCell"/>
</dbReference>
<dbReference type="GO" id="GO:0042025">
    <property type="term" value="C:host cell nucleus"/>
    <property type="evidence" value="ECO:0007669"/>
    <property type="project" value="UniProtKB-SubCell"/>
</dbReference>
<dbReference type="GO" id="GO:0019033">
    <property type="term" value="C:viral tegument"/>
    <property type="evidence" value="ECO:0007669"/>
    <property type="project" value="UniProtKB-SubCell"/>
</dbReference>
<dbReference type="InterPro" id="IPR004936">
    <property type="entry name" value="Herpes_UL21"/>
</dbReference>
<dbReference type="Pfam" id="PF03252">
    <property type="entry name" value="Herpes_UL21"/>
    <property type="match status" value="1"/>
</dbReference>
<protein>
    <recommendedName>
        <fullName>Tegument protein UL21</fullName>
    </recommendedName>
</protein>
<organism>
    <name type="scientific">Psittacid herpesvirus 1 (isolate Amazon parrot/-/97-0001/1997)</name>
    <name type="common">PsHV-1</name>
    <name type="synonym">Pacheco's disease virus</name>
    <dbReference type="NCBI Taxonomy" id="670426"/>
    <lineage>
        <taxon>Viruses</taxon>
        <taxon>Duplodnaviria</taxon>
        <taxon>Heunggongvirae</taxon>
        <taxon>Peploviricota</taxon>
        <taxon>Herviviricetes</taxon>
        <taxon>Herpesvirales</taxon>
        <taxon>Orthoherpesviridae</taxon>
        <taxon>Alphaherpesvirinae</taxon>
        <taxon>Iltovirus</taxon>
        <taxon>Iltovirus psittacidalpha1</taxon>
        <taxon>Psittacid alphaherpesvirus 1</taxon>
    </lineage>
</organism>
<organismHost>
    <name type="scientific">Amazona oratrix</name>
    <name type="common">yellow-headed parrot</name>
    <dbReference type="NCBI Taxonomy" id="152276"/>
</organismHost>
<reference key="1">
    <citation type="journal article" date="2006" name="J. Virol.">
        <title>Psittacid herpesvirus 1 and infectious laryngotracheitis virus: Comparative genome sequence analysis of two avian alphaherpesviruses.</title>
        <authorList>
            <person name="Thureen D.R."/>
            <person name="Keeler C.L. Jr."/>
        </authorList>
    </citation>
    <scope>NUCLEOTIDE SEQUENCE [LARGE SCALE GENOMIC DNA]</scope>
</reference>
<gene>
    <name type="primary">UL21</name>
</gene>
<evidence type="ECO:0000250" key="1"/>
<evidence type="ECO:0000256" key="2">
    <source>
        <dbReference type="SAM" id="MobiDB-lite"/>
    </source>
</evidence>
<evidence type="ECO:0000305" key="3"/>